<organism>
    <name type="scientific">Escherichia coli O17:K52:H18 (strain UMN026 / ExPEC)</name>
    <dbReference type="NCBI Taxonomy" id="585056"/>
    <lineage>
        <taxon>Bacteria</taxon>
        <taxon>Pseudomonadati</taxon>
        <taxon>Pseudomonadota</taxon>
        <taxon>Gammaproteobacteria</taxon>
        <taxon>Enterobacterales</taxon>
        <taxon>Enterobacteriaceae</taxon>
        <taxon>Escherichia</taxon>
    </lineage>
</organism>
<keyword id="KW-0479">Metal-binding</keyword>
<keyword id="KW-0500">Molybdenum</keyword>
<keyword id="KW-0560">Oxidoreductase</keyword>
<keyword id="KW-0574">Periplasm</keyword>
<keyword id="KW-0732">Signal</keyword>
<sequence>MKKNQFLKESDVTAESVFFMKRRQVLKALGISAAALSLPHAAHADLLSWFKGNDRPPAPAGKPLEFSKPAAWQNDLPLTPADKVSGYNNFYEFGLDKADPAANAGSLKTDPWTLKISGEVAKPLTLDHDDLTRRFPLEERIYRMRCVEAWSMVVPWIGFPLHKLLALAEPTSNAKYVAFETIYAPEQMPGQQDRFIGGGLKYPYVEGLRLDEAMHPLTLMTVGVYGKALPPQNGAPVRLIVPWKYGFKGIKSIVSIKLTRECPPTTWNLAAPDEYGFYANVNPHVDHPRWSQATERFIGSGGILDVQRQPTLLFNGYADQVASLYRGLDLRENF</sequence>
<feature type="signal peptide" description="Tat-type signal" evidence="1">
    <location>
        <begin position="1"/>
        <end position="44"/>
    </location>
</feature>
<feature type="chain" id="PRO_1000138713" description="Protein-methionine-sulfoxide reductase catalytic subunit MsrP" evidence="1">
    <location>
        <begin position="45"/>
        <end position="334"/>
    </location>
</feature>
<feature type="binding site" evidence="1">
    <location>
        <position position="88"/>
    </location>
    <ligand>
        <name>Mo-molybdopterin</name>
        <dbReference type="ChEBI" id="CHEBI:71302"/>
    </ligand>
</feature>
<feature type="binding site" evidence="1">
    <location>
        <begin position="91"/>
        <end position="92"/>
    </location>
    <ligand>
        <name>Mo-molybdopterin</name>
        <dbReference type="ChEBI" id="CHEBI:71302"/>
    </ligand>
</feature>
<feature type="binding site" evidence="1">
    <location>
        <position position="146"/>
    </location>
    <ligand>
        <name>Mo-molybdopterin</name>
        <dbReference type="ChEBI" id="CHEBI:71302"/>
    </ligand>
    <ligandPart>
        <name>Mo</name>
        <dbReference type="ChEBI" id="CHEBI:28685"/>
    </ligandPart>
</feature>
<feature type="binding site" evidence="1">
    <location>
        <position position="181"/>
    </location>
    <ligand>
        <name>Mo-molybdopterin</name>
        <dbReference type="ChEBI" id="CHEBI:71302"/>
    </ligand>
</feature>
<feature type="binding site" evidence="1">
    <location>
        <position position="233"/>
    </location>
    <ligand>
        <name>Mo-molybdopterin</name>
        <dbReference type="ChEBI" id="CHEBI:71302"/>
    </ligand>
</feature>
<feature type="binding site" evidence="1">
    <location>
        <position position="238"/>
    </location>
    <ligand>
        <name>Mo-molybdopterin</name>
        <dbReference type="ChEBI" id="CHEBI:71302"/>
    </ligand>
</feature>
<feature type="binding site" evidence="1">
    <location>
        <begin position="249"/>
        <end position="251"/>
    </location>
    <ligand>
        <name>Mo-molybdopterin</name>
        <dbReference type="ChEBI" id="CHEBI:71302"/>
    </ligand>
</feature>
<reference key="1">
    <citation type="journal article" date="2009" name="PLoS Genet.">
        <title>Organised genome dynamics in the Escherichia coli species results in highly diverse adaptive paths.</title>
        <authorList>
            <person name="Touchon M."/>
            <person name="Hoede C."/>
            <person name="Tenaillon O."/>
            <person name="Barbe V."/>
            <person name="Baeriswyl S."/>
            <person name="Bidet P."/>
            <person name="Bingen E."/>
            <person name="Bonacorsi S."/>
            <person name="Bouchier C."/>
            <person name="Bouvet O."/>
            <person name="Calteau A."/>
            <person name="Chiapello H."/>
            <person name="Clermont O."/>
            <person name="Cruveiller S."/>
            <person name="Danchin A."/>
            <person name="Diard M."/>
            <person name="Dossat C."/>
            <person name="Karoui M.E."/>
            <person name="Frapy E."/>
            <person name="Garry L."/>
            <person name="Ghigo J.M."/>
            <person name="Gilles A.M."/>
            <person name="Johnson J."/>
            <person name="Le Bouguenec C."/>
            <person name="Lescat M."/>
            <person name="Mangenot S."/>
            <person name="Martinez-Jehanne V."/>
            <person name="Matic I."/>
            <person name="Nassif X."/>
            <person name="Oztas S."/>
            <person name="Petit M.A."/>
            <person name="Pichon C."/>
            <person name="Rouy Z."/>
            <person name="Ruf C.S."/>
            <person name="Schneider D."/>
            <person name="Tourret J."/>
            <person name="Vacherie B."/>
            <person name="Vallenet D."/>
            <person name="Medigue C."/>
            <person name="Rocha E.P.C."/>
            <person name="Denamur E."/>
        </authorList>
    </citation>
    <scope>NUCLEOTIDE SEQUENCE [LARGE SCALE GENOMIC DNA]</scope>
    <source>
        <strain>UMN026 / ExPEC</strain>
    </source>
</reference>
<comment type="function">
    <text evidence="1">Part of the MsrPQ system that repairs oxidized periplasmic proteins containing methionine sulfoxide residues (Met-O), using respiratory chain electrons. Thus protects these proteins from oxidative-stress damage caused by reactive species of oxygen and chlorine generated by the host defense mechanisms. MsrPQ is essential for the maintenance of envelope integrity under bleach stress, rescuing a wide series of structurally unrelated periplasmic proteins from methionine oxidation, including the primary periplasmic chaperone SurA and the lipoprotein Pal. The catalytic subunit MsrP is non-stereospecific, being able to reduce both (R-) and (S-) diastereoisomers of methionine sulfoxide.</text>
</comment>
<comment type="catalytic activity">
    <reaction evidence="1">
        <text>L-methionyl-[protein] + a quinone + H2O = L-methionyl-(S)-S-oxide-[protein] + a quinol</text>
        <dbReference type="Rhea" id="RHEA:51292"/>
        <dbReference type="Rhea" id="RHEA-COMP:12313"/>
        <dbReference type="Rhea" id="RHEA-COMP:12315"/>
        <dbReference type="ChEBI" id="CHEBI:15377"/>
        <dbReference type="ChEBI" id="CHEBI:16044"/>
        <dbReference type="ChEBI" id="CHEBI:24646"/>
        <dbReference type="ChEBI" id="CHEBI:44120"/>
        <dbReference type="ChEBI" id="CHEBI:132124"/>
    </reaction>
</comment>
<comment type="catalytic activity">
    <reaction evidence="1">
        <text>L-methionyl-[protein] + a quinone + H2O = L-methionyl-(R)-S-oxide-[protein] + a quinol</text>
        <dbReference type="Rhea" id="RHEA:51296"/>
        <dbReference type="Rhea" id="RHEA-COMP:12313"/>
        <dbReference type="Rhea" id="RHEA-COMP:12314"/>
        <dbReference type="ChEBI" id="CHEBI:15377"/>
        <dbReference type="ChEBI" id="CHEBI:16044"/>
        <dbReference type="ChEBI" id="CHEBI:24646"/>
        <dbReference type="ChEBI" id="CHEBI:45764"/>
        <dbReference type="ChEBI" id="CHEBI:132124"/>
    </reaction>
</comment>
<comment type="cofactor">
    <cofactor evidence="1">
        <name>Mo-molybdopterin</name>
        <dbReference type="ChEBI" id="CHEBI:71302"/>
    </cofactor>
    <text evidence="1">Binds 1 Mo-molybdopterin (Mo-MPT) cofactor per subunit.</text>
</comment>
<comment type="subunit">
    <text evidence="1">Heterodimer of a catalytic subunit (MsrP) and a heme-binding subunit (MsrQ).</text>
</comment>
<comment type="subcellular location">
    <subcellularLocation>
        <location evidence="1">Periplasm</location>
    </subcellularLocation>
    <text evidence="1">Is attached to the inner membrane when interacting with the MsrQ subunit.</text>
</comment>
<comment type="PTM">
    <text evidence="1">Predicted to be exported by the Tat system. The position of the signal peptide cleavage has not been experimentally proven.</text>
</comment>
<comment type="similarity">
    <text evidence="1">Belongs to the MsrP family.</text>
</comment>
<accession>B7NBW2</accession>
<evidence type="ECO:0000255" key="1">
    <source>
        <dbReference type="HAMAP-Rule" id="MF_01206"/>
    </source>
</evidence>
<protein>
    <recommendedName>
        <fullName evidence="1">Protein-methionine-sulfoxide reductase catalytic subunit MsrP</fullName>
        <ecNumber evidence="1">1.8.5.-</ecNumber>
    </recommendedName>
</protein>
<name>MSRP_ECOLU</name>
<gene>
    <name evidence="1" type="primary">msrP</name>
    <name type="ordered locus">ECUMN_2262</name>
</gene>
<dbReference type="EC" id="1.8.5.-" evidence="1"/>
<dbReference type="EMBL" id="CU928163">
    <property type="protein sequence ID" value="CAR13452.1"/>
    <property type="molecule type" value="Genomic_DNA"/>
</dbReference>
<dbReference type="RefSeq" id="WP_000740092.1">
    <property type="nucleotide sequence ID" value="NC_011751.1"/>
</dbReference>
<dbReference type="RefSeq" id="YP_002412981.1">
    <property type="nucleotide sequence ID" value="NC_011751.1"/>
</dbReference>
<dbReference type="SMR" id="B7NBW2"/>
<dbReference type="STRING" id="585056.ECUMN_2262"/>
<dbReference type="KEGG" id="eum:ECUMN_2262"/>
<dbReference type="PATRIC" id="fig|585056.7.peg.2450"/>
<dbReference type="HOGENOM" id="CLU_045520_0_0_6"/>
<dbReference type="Proteomes" id="UP000007097">
    <property type="component" value="Chromosome"/>
</dbReference>
<dbReference type="GO" id="GO:0042597">
    <property type="term" value="C:periplasmic space"/>
    <property type="evidence" value="ECO:0007669"/>
    <property type="project" value="UniProtKB-SubCell"/>
</dbReference>
<dbReference type="GO" id="GO:0046872">
    <property type="term" value="F:metal ion binding"/>
    <property type="evidence" value="ECO:0007669"/>
    <property type="project" value="UniProtKB-KW"/>
</dbReference>
<dbReference type="GO" id="GO:0043546">
    <property type="term" value="F:molybdopterin cofactor binding"/>
    <property type="evidence" value="ECO:0007669"/>
    <property type="project" value="UniProtKB-UniRule"/>
</dbReference>
<dbReference type="GO" id="GO:0016672">
    <property type="term" value="F:oxidoreductase activity, acting on a sulfur group of donors, quinone or similar compound as acceptor"/>
    <property type="evidence" value="ECO:0007669"/>
    <property type="project" value="UniProtKB-UniRule"/>
</dbReference>
<dbReference type="GO" id="GO:0030091">
    <property type="term" value="P:protein repair"/>
    <property type="evidence" value="ECO:0007669"/>
    <property type="project" value="UniProtKB-UniRule"/>
</dbReference>
<dbReference type="CDD" id="cd02107">
    <property type="entry name" value="YedY_like_Moco"/>
    <property type="match status" value="1"/>
</dbReference>
<dbReference type="FunFam" id="3.90.420.10:FF:000001">
    <property type="entry name" value="Protein-methionine-sulfoxide reductase catalytic subunit MsrP"/>
    <property type="match status" value="1"/>
</dbReference>
<dbReference type="Gene3D" id="3.90.420.10">
    <property type="entry name" value="Oxidoreductase, molybdopterin-binding domain"/>
    <property type="match status" value="1"/>
</dbReference>
<dbReference type="HAMAP" id="MF_01206">
    <property type="entry name" value="MsrP"/>
    <property type="match status" value="1"/>
</dbReference>
<dbReference type="InterPro" id="IPR022867">
    <property type="entry name" value="MsrP"/>
</dbReference>
<dbReference type="InterPro" id="IPR000572">
    <property type="entry name" value="OxRdtase_Mopterin-bd_dom"/>
</dbReference>
<dbReference type="InterPro" id="IPR036374">
    <property type="entry name" value="OxRdtase_Mopterin-bd_sf"/>
</dbReference>
<dbReference type="InterPro" id="IPR006311">
    <property type="entry name" value="TAT_signal"/>
</dbReference>
<dbReference type="NCBIfam" id="NF003767">
    <property type="entry name" value="PRK05363.1"/>
    <property type="match status" value="1"/>
</dbReference>
<dbReference type="PANTHER" id="PTHR43032">
    <property type="entry name" value="PROTEIN-METHIONINE-SULFOXIDE REDUCTASE"/>
    <property type="match status" value="1"/>
</dbReference>
<dbReference type="PANTHER" id="PTHR43032:SF3">
    <property type="entry name" value="PROTEIN-METHIONINE-SULFOXIDE REDUCTASE CATALYTIC SUBUNIT MSRP"/>
    <property type="match status" value="1"/>
</dbReference>
<dbReference type="Pfam" id="PF00174">
    <property type="entry name" value="Oxidored_molyb"/>
    <property type="match status" value="1"/>
</dbReference>
<dbReference type="SUPFAM" id="SSF56524">
    <property type="entry name" value="Oxidoreductase molybdopterin-binding domain"/>
    <property type="match status" value="1"/>
</dbReference>
<dbReference type="PROSITE" id="PS51318">
    <property type="entry name" value="TAT"/>
    <property type="match status" value="1"/>
</dbReference>
<proteinExistence type="inferred from homology"/>